<keyword id="KW-0903">Direct protein sequencing</keyword>
<keyword id="KW-0256">Endoplasmic reticulum</keyword>
<keyword id="KW-0349">Heme</keyword>
<keyword id="KW-0408">Iron</keyword>
<keyword id="KW-0472">Membrane</keyword>
<keyword id="KW-0479">Metal-binding</keyword>
<keyword id="KW-0492">Microsome</keyword>
<keyword id="KW-0503">Monooxygenase</keyword>
<keyword id="KW-0560">Oxidoreductase</keyword>
<keyword id="KW-1185">Reference proteome</keyword>
<sequence length="511" mass="58936">MVLNFLSPSLSRLGLWASVVILMVIVLKLFSLLLRRQKLARAMDSFPGPPTHWLFGHALEIQKLGSLDKVVSWAQQFPHAHPLWFGQFVGFLNIYEPDYAKAVYSRGDPKAADVYDFFLQWIGKGLLVLDGPKWFQHRKLLTPGFHYDVLKPYVAIFAESTRMMLDKWEKKASENKSFDIFCDVGHMALDTLMKCTFGKGDSGLGHRDNSYYLAVSDLTLLMQQRIDSFQYHNDFIYWLTPHGRRFLRACKIAHDHTDEVIRQRKAALQDEKERKKIQQRRHLDFLDILLGVRDESGIKLSDAELRAEVDTFMFEGHDTTTSGISWFLYCMALYPEHQQLCREEVRGILGDQDSFQWDDLAKMTYLTMCMKECFRLYPPVPQVYRQLNKPVTFVDGRSLPAGSLISLHIYALHRNSTVWPDPEVFDPLRFSPENAAGRHPFAFMPFSAGPRNCIGQQFAMNEMKVVTALCLLRFEFSLDPSKMPIKVPQLILRSKNGIHLYLKPLASRSGK</sequence>
<accession>P15129</accession>
<gene>
    <name type="primary">Cyp4b1</name>
    <name type="synonym">Cyp4b-1</name>
</gene>
<protein>
    <recommendedName>
        <fullName>Cytochrome P450 4B1</fullName>
        <ecNumber>1.14.14.1</ecNumber>
    </recommendedName>
    <alternativeName>
        <fullName>CYPIVB1</fullName>
    </alternativeName>
    <alternativeName>
        <fullName>Cytochrome P450 L-2</fullName>
    </alternativeName>
    <alternativeName>
        <fullName>Cytochrome P450 isozyme 5</fullName>
    </alternativeName>
</protein>
<feature type="initiator methionine" description="Removed" evidence="2">
    <location>
        <position position="1"/>
    </location>
</feature>
<feature type="chain" id="PRO_0000051822" description="Cytochrome P450 4B1">
    <location>
        <begin position="2"/>
        <end position="511"/>
    </location>
</feature>
<feature type="binding site" description="covalent" evidence="1">
    <location>
        <position position="315"/>
    </location>
    <ligand>
        <name>heme</name>
        <dbReference type="ChEBI" id="CHEBI:30413"/>
    </ligand>
</feature>
<feature type="binding site" description="axial binding residue" evidence="1">
    <location>
        <position position="453"/>
    </location>
    <ligand>
        <name>heme</name>
        <dbReference type="ChEBI" id="CHEBI:30413"/>
    </ligand>
    <ligandPart>
        <name>Fe</name>
        <dbReference type="ChEBI" id="CHEBI:18248"/>
    </ligandPart>
</feature>
<evidence type="ECO:0000250" key="1">
    <source>
        <dbReference type="UniProtKB" id="P51869"/>
    </source>
</evidence>
<evidence type="ECO:0000269" key="2">
    <source>
    </source>
</evidence>
<evidence type="ECO:0000305" key="3"/>
<organism>
    <name type="scientific">Rattus norvegicus</name>
    <name type="common">Rat</name>
    <dbReference type="NCBI Taxonomy" id="10116"/>
    <lineage>
        <taxon>Eukaryota</taxon>
        <taxon>Metazoa</taxon>
        <taxon>Chordata</taxon>
        <taxon>Craniata</taxon>
        <taxon>Vertebrata</taxon>
        <taxon>Euteleostomi</taxon>
        <taxon>Mammalia</taxon>
        <taxon>Eutheria</taxon>
        <taxon>Euarchontoglires</taxon>
        <taxon>Glires</taxon>
        <taxon>Rodentia</taxon>
        <taxon>Myomorpha</taxon>
        <taxon>Muroidea</taxon>
        <taxon>Muridae</taxon>
        <taxon>Murinae</taxon>
        <taxon>Rattus</taxon>
    </lineage>
</organism>
<proteinExistence type="evidence at protein level"/>
<reference key="1">
    <citation type="journal article" date="1989" name="Mol. Pharmacol.">
        <title>Primary structures of cytochrome P-450 isozyme 5 from rabbit and rat and regulation of species-dependent expression and induction in lung and liver: identification of cytochrome P-450 gene subfamily IVB.</title>
        <authorList>
            <person name="Gasser R."/>
            <person name="Philpot R.M."/>
        </authorList>
    </citation>
    <scope>NUCLEOTIDE SEQUENCE [MRNA]</scope>
</reference>
<reference key="2">
    <citation type="journal article" date="2004" name="Genome Res.">
        <title>The status, quality, and expansion of the NIH full-length cDNA project: the Mammalian Gene Collection (MGC).</title>
        <authorList>
            <consortium name="The MGC Project Team"/>
        </authorList>
    </citation>
    <scope>NUCLEOTIDE SEQUENCE [LARGE SCALE MRNA]</scope>
    <source>
        <tissue>Lung</tissue>
    </source>
</reference>
<reference key="3">
    <citation type="journal article" date="1990" name="J. Biochem.">
        <title>Purification and characterization of rat pulmonary cytochrome P-450.</title>
        <authorList>
            <person name="Imaoka S."/>
            <person name="Funae Y."/>
        </authorList>
    </citation>
    <scope>PROTEIN SEQUENCE OF 2-11</scope>
    <source>
        <tissue>Lung</tissue>
    </source>
</reference>
<comment type="function">
    <text>Cytochromes P450 are a group of heme-thiolate monooxygenases. In liver microsomes, this enzyme is involved in an NADPH-dependent electron transport pathway. It oxidizes a variety of structurally unrelated compounds, including steroids, fatty acids, and xenobiotics.</text>
</comment>
<comment type="catalytic activity">
    <reaction>
        <text>an organic molecule + reduced [NADPH--hemoprotein reductase] + O2 = an alcohol + oxidized [NADPH--hemoprotein reductase] + H2O + H(+)</text>
        <dbReference type="Rhea" id="RHEA:17149"/>
        <dbReference type="Rhea" id="RHEA-COMP:11964"/>
        <dbReference type="Rhea" id="RHEA-COMP:11965"/>
        <dbReference type="ChEBI" id="CHEBI:15377"/>
        <dbReference type="ChEBI" id="CHEBI:15378"/>
        <dbReference type="ChEBI" id="CHEBI:15379"/>
        <dbReference type="ChEBI" id="CHEBI:30879"/>
        <dbReference type="ChEBI" id="CHEBI:57618"/>
        <dbReference type="ChEBI" id="CHEBI:58210"/>
        <dbReference type="ChEBI" id="CHEBI:142491"/>
        <dbReference type="EC" id="1.14.14.1"/>
    </reaction>
</comment>
<comment type="cofactor">
    <cofactor evidence="1">
        <name>heme</name>
        <dbReference type="ChEBI" id="CHEBI:30413"/>
    </cofactor>
</comment>
<comment type="subcellular location">
    <subcellularLocation>
        <location>Endoplasmic reticulum membrane</location>
        <topology>Peripheral membrane protein</topology>
    </subcellularLocation>
    <subcellularLocation>
        <location>Microsome membrane</location>
        <topology>Peripheral membrane protein</topology>
    </subcellularLocation>
</comment>
<comment type="induction">
    <text>P450 can be induced to high levels in liver and other tissues by various foreign compounds, including drugs, pesticides, and carcinogens.</text>
</comment>
<comment type="similarity">
    <text evidence="3">Belongs to the cytochrome P450 family.</text>
</comment>
<dbReference type="EC" id="1.14.14.1"/>
<dbReference type="EMBL" id="M29853">
    <property type="protein sequence ID" value="AAA41778.1"/>
    <property type="molecule type" value="mRNA"/>
</dbReference>
<dbReference type="EMBL" id="BC074012">
    <property type="protein sequence ID" value="AAH74012.1"/>
    <property type="molecule type" value="mRNA"/>
</dbReference>
<dbReference type="PIR" id="B40164">
    <property type="entry name" value="B40164"/>
</dbReference>
<dbReference type="RefSeq" id="NP_058695.2">
    <property type="nucleotide sequence ID" value="NM_016999.2"/>
</dbReference>
<dbReference type="SMR" id="P15129"/>
<dbReference type="FunCoup" id="P15129">
    <property type="interactions" value="83"/>
</dbReference>
<dbReference type="STRING" id="10116.ENSRNOP00000013321"/>
<dbReference type="iPTMnet" id="P15129"/>
<dbReference type="PhosphoSitePlus" id="P15129"/>
<dbReference type="PaxDb" id="10116-ENSRNOP00000013321"/>
<dbReference type="Ensembl" id="ENSRNOT00000013321.7">
    <property type="protein sequence ID" value="ENSRNOP00000013321.4"/>
    <property type="gene ID" value="ENSRNOG00000055078.2"/>
</dbReference>
<dbReference type="GeneID" id="24307"/>
<dbReference type="KEGG" id="rno:24307"/>
<dbReference type="UCSC" id="RGD:2480">
    <property type="organism name" value="rat"/>
</dbReference>
<dbReference type="AGR" id="RGD:2480"/>
<dbReference type="CTD" id="1580"/>
<dbReference type="RGD" id="2480">
    <property type="gene designation" value="Cyp4b1"/>
</dbReference>
<dbReference type="eggNOG" id="KOG0157">
    <property type="taxonomic scope" value="Eukaryota"/>
</dbReference>
<dbReference type="GeneTree" id="ENSGT00940000161441"/>
<dbReference type="HOGENOM" id="CLU_001570_5_1_1"/>
<dbReference type="InParanoid" id="P15129"/>
<dbReference type="OMA" id="IQPAFRL"/>
<dbReference type="OrthoDB" id="1470350at2759"/>
<dbReference type="PhylomeDB" id="P15129"/>
<dbReference type="Reactome" id="R-RNO-211935">
    <property type="pathway name" value="Fatty acids"/>
</dbReference>
<dbReference type="Reactome" id="R-RNO-211958">
    <property type="pathway name" value="Miscellaneous substrates"/>
</dbReference>
<dbReference type="Reactome" id="R-RNO-211979">
    <property type="pathway name" value="Eicosanoids"/>
</dbReference>
<dbReference type="Reactome" id="R-RNO-2142691">
    <property type="pathway name" value="Synthesis of Leukotrienes (LT) and Eoxins (EX)"/>
</dbReference>
<dbReference type="PRO" id="PR:P15129"/>
<dbReference type="Proteomes" id="UP000002494">
    <property type="component" value="Chromosome 5"/>
</dbReference>
<dbReference type="Bgee" id="ENSRNOG00000055078">
    <property type="expression patterns" value="Expressed in lung and 18 other cell types or tissues"/>
</dbReference>
<dbReference type="GO" id="GO:0005789">
    <property type="term" value="C:endoplasmic reticulum membrane"/>
    <property type="evidence" value="ECO:0007669"/>
    <property type="project" value="UniProtKB-SubCell"/>
</dbReference>
<dbReference type="GO" id="GO:0020037">
    <property type="term" value="F:heme binding"/>
    <property type="evidence" value="ECO:0007669"/>
    <property type="project" value="InterPro"/>
</dbReference>
<dbReference type="GO" id="GO:1901363">
    <property type="term" value="F:heterocyclic compound binding"/>
    <property type="evidence" value="ECO:0000353"/>
    <property type="project" value="RGD"/>
</dbReference>
<dbReference type="GO" id="GO:0005506">
    <property type="term" value="F:iron ion binding"/>
    <property type="evidence" value="ECO:0007669"/>
    <property type="project" value="InterPro"/>
</dbReference>
<dbReference type="GO" id="GO:0004497">
    <property type="term" value="F:monooxygenase activity"/>
    <property type="evidence" value="ECO:0000304"/>
    <property type="project" value="RGD"/>
</dbReference>
<dbReference type="GO" id="GO:0016712">
    <property type="term" value="F:oxidoreductase activity, acting on paired donors, with incorporation or reduction of molecular oxygen, reduced flavin or flavoprotein as one donor, and incorporation of one atom of oxygen"/>
    <property type="evidence" value="ECO:0007669"/>
    <property type="project" value="UniProtKB-EC"/>
</dbReference>
<dbReference type="GO" id="GO:0018879">
    <property type="term" value="P:biphenyl metabolic process"/>
    <property type="evidence" value="ECO:0000314"/>
    <property type="project" value="RGD"/>
</dbReference>
<dbReference type="CDD" id="cd20678">
    <property type="entry name" value="CYP4B-like"/>
    <property type="match status" value="1"/>
</dbReference>
<dbReference type="FunFam" id="1.10.630.10:FF:000005">
    <property type="entry name" value="cytochrome P450 4F22 isoform X2"/>
    <property type="match status" value="1"/>
</dbReference>
<dbReference type="Gene3D" id="1.10.630.10">
    <property type="entry name" value="Cytochrome P450"/>
    <property type="match status" value="1"/>
</dbReference>
<dbReference type="InterPro" id="IPR001128">
    <property type="entry name" value="Cyt_P450"/>
</dbReference>
<dbReference type="InterPro" id="IPR017972">
    <property type="entry name" value="Cyt_P450_CS"/>
</dbReference>
<dbReference type="InterPro" id="IPR002401">
    <property type="entry name" value="Cyt_P450_E_grp-I"/>
</dbReference>
<dbReference type="InterPro" id="IPR036396">
    <property type="entry name" value="Cyt_P450_sf"/>
</dbReference>
<dbReference type="InterPro" id="IPR050196">
    <property type="entry name" value="Cytochrome_P450_Monoox"/>
</dbReference>
<dbReference type="PANTHER" id="PTHR24291:SF149">
    <property type="entry name" value="CYTOCHROME P450 4B1"/>
    <property type="match status" value="1"/>
</dbReference>
<dbReference type="PANTHER" id="PTHR24291">
    <property type="entry name" value="CYTOCHROME P450 FAMILY 4"/>
    <property type="match status" value="1"/>
</dbReference>
<dbReference type="Pfam" id="PF00067">
    <property type="entry name" value="p450"/>
    <property type="match status" value="1"/>
</dbReference>
<dbReference type="PRINTS" id="PR00463">
    <property type="entry name" value="EP450I"/>
</dbReference>
<dbReference type="PRINTS" id="PR00385">
    <property type="entry name" value="P450"/>
</dbReference>
<dbReference type="SUPFAM" id="SSF48264">
    <property type="entry name" value="Cytochrome P450"/>
    <property type="match status" value="1"/>
</dbReference>
<dbReference type="PROSITE" id="PS00086">
    <property type="entry name" value="CYTOCHROME_P450"/>
    <property type="match status" value="1"/>
</dbReference>
<name>CP4B1_RAT</name>